<protein>
    <recommendedName>
        <fullName evidence="1">Ion-translocating oxidoreductase complex subunit D</fullName>
        <ecNumber evidence="1">7.-.-.-</ecNumber>
    </recommendedName>
    <alternativeName>
        <fullName evidence="1">Rnf electron transport complex subunit D</fullName>
    </alternativeName>
</protein>
<proteinExistence type="inferred from homology"/>
<name>RNFD_ACTP2</name>
<evidence type="ECO:0000255" key="1">
    <source>
        <dbReference type="HAMAP-Rule" id="MF_00462"/>
    </source>
</evidence>
<dbReference type="EC" id="7.-.-.-" evidence="1"/>
<dbReference type="EMBL" id="CP000569">
    <property type="protein sequence ID" value="ABN73277.1"/>
    <property type="molecule type" value="Genomic_DNA"/>
</dbReference>
<dbReference type="SMR" id="A3MYP1"/>
<dbReference type="STRING" id="416269.APL_0169"/>
<dbReference type="EnsemblBacteria" id="ABN73277">
    <property type="protein sequence ID" value="ABN73277"/>
    <property type="gene ID" value="APL_0169"/>
</dbReference>
<dbReference type="KEGG" id="apl:APL_0169"/>
<dbReference type="eggNOG" id="COG4658">
    <property type="taxonomic scope" value="Bacteria"/>
</dbReference>
<dbReference type="HOGENOM" id="CLU_042020_0_0_6"/>
<dbReference type="Proteomes" id="UP000001432">
    <property type="component" value="Chromosome"/>
</dbReference>
<dbReference type="GO" id="GO:0005886">
    <property type="term" value="C:plasma membrane"/>
    <property type="evidence" value="ECO:0007669"/>
    <property type="project" value="UniProtKB-SubCell"/>
</dbReference>
<dbReference type="GO" id="GO:0022900">
    <property type="term" value="P:electron transport chain"/>
    <property type="evidence" value="ECO:0007669"/>
    <property type="project" value="UniProtKB-UniRule"/>
</dbReference>
<dbReference type="GO" id="GO:0055085">
    <property type="term" value="P:transmembrane transport"/>
    <property type="evidence" value="ECO:0007669"/>
    <property type="project" value="InterPro"/>
</dbReference>
<dbReference type="HAMAP" id="MF_00462">
    <property type="entry name" value="RsxD_RnfD"/>
    <property type="match status" value="1"/>
</dbReference>
<dbReference type="InterPro" id="IPR004338">
    <property type="entry name" value="NqrB/RnfD"/>
</dbReference>
<dbReference type="InterPro" id="IPR011303">
    <property type="entry name" value="RnfD_bac"/>
</dbReference>
<dbReference type="NCBIfam" id="NF002011">
    <property type="entry name" value="PRK00816.1"/>
    <property type="match status" value="1"/>
</dbReference>
<dbReference type="NCBIfam" id="TIGR01946">
    <property type="entry name" value="rnfD"/>
    <property type="match status" value="1"/>
</dbReference>
<dbReference type="PANTHER" id="PTHR30578">
    <property type="entry name" value="ELECTRON TRANSPORT COMPLEX PROTEIN RNFD"/>
    <property type="match status" value="1"/>
</dbReference>
<dbReference type="PANTHER" id="PTHR30578:SF0">
    <property type="entry name" value="ION-TRANSLOCATING OXIDOREDUCTASE COMPLEX SUBUNIT D"/>
    <property type="match status" value="1"/>
</dbReference>
<dbReference type="Pfam" id="PF03116">
    <property type="entry name" value="NQR2_RnfD_RnfE"/>
    <property type="match status" value="1"/>
</dbReference>
<gene>
    <name evidence="1" type="primary">rnfD</name>
    <name type="ordered locus">APL_0169</name>
</gene>
<comment type="function">
    <text evidence="1">Part of a membrane-bound complex that couples electron transfer with translocation of ions across the membrane.</text>
</comment>
<comment type="cofactor">
    <cofactor evidence="1">
        <name>FMN</name>
        <dbReference type="ChEBI" id="CHEBI:58210"/>
    </cofactor>
</comment>
<comment type="subunit">
    <text evidence="1">The complex is composed of six subunits: RnfA, RnfB, RnfC, RnfD, RnfE and RnfG.</text>
</comment>
<comment type="subcellular location">
    <subcellularLocation>
        <location evidence="1">Cell inner membrane</location>
        <topology evidence="1">Multi-pass membrane protein</topology>
    </subcellularLocation>
</comment>
<comment type="similarity">
    <text evidence="1">Belongs to the NqrB/RnfD family.</text>
</comment>
<organism>
    <name type="scientific">Actinobacillus pleuropneumoniae serotype 5b (strain L20)</name>
    <dbReference type="NCBI Taxonomy" id="416269"/>
    <lineage>
        <taxon>Bacteria</taxon>
        <taxon>Pseudomonadati</taxon>
        <taxon>Pseudomonadota</taxon>
        <taxon>Gammaproteobacteria</taxon>
        <taxon>Pasteurellales</taxon>
        <taxon>Pasteurellaceae</taxon>
        <taxon>Actinobacillus</taxon>
    </lineage>
</organism>
<keyword id="KW-0997">Cell inner membrane</keyword>
<keyword id="KW-1003">Cell membrane</keyword>
<keyword id="KW-0249">Electron transport</keyword>
<keyword id="KW-0285">Flavoprotein</keyword>
<keyword id="KW-0288">FMN</keyword>
<keyword id="KW-0472">Membrane</keyword>
<keyword id="KW-0597">Phosphoprotein</keyword>
<keyword id="KW-1185">Reference proteome</keyword>
<keyword id="KW-1278">Translocase</keyword>
<keyword id="KW-0812">Transmembrane</keyword>
<keyword id="KW-1133">Transmembrane helix</keyword>
<keyword id="KW-0813">Transport</keyword>
<feature type="chain" id="PRO_1000013620" description="Ion-translocating oxidoreductase complex subunit D">
    <location>
        <begin position="1"/>
        <end position="348"/>
    </location>
</feature>
<feature type="transmembrane region" description="Helical" evidence="1">
    <location>
        <begin position="15"/>
        <end position="35"/>
    </location>
</feature>
<feature type="transmembrane region" description="Helical" evidence="1">
    <location>
        <begin position="36"/>
        <end position="56"/>
    </location>
</feature>
<feature type="transmembrane region" description="Helical" evidence="1">
    <location>
        <begin position="67"/>
        <end position="87"/>
    </location>
</feature>
<feature type="transmembrane region" description="Helical" evidence="1">
    <location>
        <begin position="88"/>
        <end position="108"/>
    </location>
</feature>
<feature type="transmembrane region" description="Helical" evidence="1">
    <location>
        <begin position="125"/>
        <end position="145"/>
    </location>
</feature>
<feature type="transmembrane region" description="Helical" evidence="1">
    <location>
        <begin position="212"/>
        <end position="232"/>
    </location>
</feature>
<feature type="transmembrane region" description="Helical" evidence="1">
    <location>
        <begin position="241"/>
        <end position="261"/>
    </location>
</feature>
<feature type="transmembrane region" description="Helical" evidence="1">
    <location>
        <begin position="265"/>
        <end position="285"/>
    </location>
</feature>
<feature type="transmembrane region" description="Helical" evidence="1">
    <location>
        <begin position="298"/>
        <end position="318"/>
    </location>
</feature>
<feature type="transmembrane region" description="Helical" evidence="1">
    <location>
        <begin position="320"/>
        <end position="340"/>
    </location>
</feature>
<feature type="modified residue" description="FMN phosphoryl threonine" evidence="1">
    <location>
        <position position="186"/>
    </location>
</feature>
<reference key="1">
    <citation type="journal article" date="2008" name="J. Bacteriol.">
        <title>The complete genome sequence of Actinobacillus pleuropneumoniae L20 (serotype 5b).</title>
        <authorList>
            <person name="Foote S.J."/>
            <person name="Bosse J.T."/>
            <person name="Bouevitch A.B."/>
            <person name="Langford P.R."/>
            <person name="Young N.M."/>
            <person name="Nash J.H.E."/>
        </authorList>
    </citation>
    <scope>NUCLEOTIDE SEQUENCE [LARGE SCALE GENOMIC DNA]</scope>
    <source>
        <strain>L20</strain>
    </source>
</reference>
<sequence length="348" mass="37692">MFKMVSSPHTHSSNLTAKFMLWVMVAMLPALGMQAYFFGYGVFIQVFIALLLAVAIEIAIAKLRRKPTAFYVADLSGVLTALILAISIPPYAPYWIIVIGIIVALLLAKHSYGGLGQNLFNPAMVAYALLLVSFPVQMTGWLVPIDLLNEPPTFGDAISLVFSGVTSDGFSVHQLLGSVDGIAQATPLDSAKTSMQKLGVEGVLQSPIFSGLFANGWWQINLAFLAGGLLLIYKRIIHWQIPAAMLGMFALLSGLTDLLLPHTHLNVVSQLFSGAMMFGAFFIATDPVTASITPRGKLIFGGLIGLFVYLIRYYGNYPDAVAFSVLLANICVPLIDHYTQPRLYGSGR</sequence>
<accession>A3MYP1</accession>